<proteinExistence type="evidence at protein level"/>
<keyword id="KW-0156">Chromatin regulator</keyword>
<keyword id="KW-0175">Coiled coil</keyword>
<keyword id="KW-0539">Nucleus</keyword>
<keyword id="KW-0597">Phosphoprotein</keyword>
<keyword id="KW-1185">Reference proteome</keyword>
<keyword id="KW-0687">Ribonucleoprotein</keyword>
<keyword id="KW-0694">RNA-binding</keyword>
<comment type="function">
    <text evidence="1 5 6">Essential protein during embryogenesis (PubMed:15266054, PubMed:27792779). Involved both in gene transcription regulation and in processing events critical for proper rRNA biogenesis and nucleolar organization during reproduction; contributes to pre-rRNA processing at the 5' external transcribed spacer (PubMed:27792779). Binds RNA (By similarity).</text>
</comment>
<comment type="subunit">
    <text evidence="6">Interacts with NUCL1, NUCL2, JMJ14, NOF1 and MPP10 in the nucleus.</text>
</comment>
<comment type="subcellular location">
    <subcellularLocation>
        <location evidence="3">Nucleus</location>
    </subcellularLocation>
    <subcellularLocation>
        <location evidence="6">Nucleus</location>
        <location evidence="6">Nucleolus</location>
    </subcellularLocation>
</comment>
<comment type="tissue specificity">
    <text evidence="6">Mainly present in tissues undergoing rapid cellular growth and differentiation (PubMed:27792779). Mostly expressed in shoots and flowers, and, to a lower extent, in leaves, siliques, roots and seedlings (PubMed:27792779).</text>
</comment>
<comment type="developmental stage">
    <text evidence="6">In seedlings, observed in the subapical region of primary roots, lateral root primordia, leaf veins and around guard cells (PubMed:27792779). In flowers, present in ovules, pollen, embryos and endosperm (PubMed:27792779).</text>
</comment>
<comment type="disruption phenotype">
    <text evidence="5 6">Embryo defective arrested at the cotyledon stage, associated with enlarged nucleoli probably due to the over-accumulation of pre-rRNAs.</text>
</comment>
<comment type="miscellaneous">
    <text evidence="10">'Thallo' is the Greek goddess of buds and shoots.</text>
</comment>
<comment type="similarity">
    <text evidence="9">Belongs to the SAS10 family.</text>
</comment>
<comment type="sequence caution" evidence="9">
    <conflict type="erroneous gene model prediction">
        <sequence resource="EMBL-CDS" id="AAB64041"/>
    </conflict>
</comment>
<comment type="online information" name="Seed defective Arabidopsis mutants">
    <link uri="http://seedgenes.org/MutantList"/>
</comment>
<name>THAL_ARATH</name>
<accession>Q8L3P4</accession>
<accession>O22838</accession>
<accession>Q0WVP9</accession>
<evidence type="ECO:0000250" key="1">
    <source>
        <dbReference type="UniProtKB" id="Q9I7W5"/>
    </source>
</evidence>
<evidence type="ECO:0000255" key="2"/>
<evidence type="ECO:0000255" key="3">
    <source>
        <dbReference type="PROSITE-ProRule" id="PRU00768"/>
    </source>
</evidence>
<evidence type="ECO:0000256" key="4">
    <source>
        <dbReference type="SAM" id="MobiDB-lite"/>
    </source>
</evidence>
<evidence type="ECO:0000269" key="5">
    <source>
    </source>
</evidence>
<evidence type="ECO:0000269" key="6">
    <source>
    </source>
</evidence>
<evidence type="ECO:0000303" key="7">
    <source>
    </source>
</evidence>
<evidence type="ECO:0000303" key="8">
    <source>
    </source>
</evidence>
<evidence type="ECO:0000305" key="9"/>
<evidence type="ECO:0000305" key="10">
    <source>
    </source>
</evidence>
<evidence type="ECO:0000312" key="11">
    <source>
        <dbReference type="Araport" id="AT2G43650"/>
    </source>
</evidence>
<evidence type="ECO:0000312" key="12">
    <source>
        <dbReference type="EMBL" id="AAB64041.1"/>
    </source>
</evidence>
<organism>
    <name type="scientific">Arabidopsis thaliana</name>
    <name type="common">Mouse-ear cress</name>
    <dbReference type="NCBI Taxonomy" id="3702"/>
    <lineage>
        <taxon>Eukaryota</taxon>
        <taxon>Viridiplantae</taxon>
        <taxon>Streptophyta</taxon>
        <taxon>Embryophyta</taxon>
        <taxon>Tracheophyta</taxon>
        <taxon>Spermatophyta</taxon>
        <taxon>Magnoliopsida</taxon>
        <taxon>eudicotyledons</taxon>
        <taxon>Gunneridae</taxon>
        <taxon>Pentapetalae</taxon>
        <taxon>rosids</taxon>
        <taxon>malvids</taxon>
        <taxon>Brassicales</taxon>
        <taxon>Brassicaceae</taxon>
        <taxon>Camelineae</taxon>
        <taxon>Arabidopsis</taxon>
    </lineage>
</organism>
<dbReference type="EMBL" id="AC002333">
    <property type="protein sequence ID" value="AAB64041.1"/>
    <property type="status" value="ALT_SEQ"/>
    <property type="molecule type" value="Genomic_DNA"/>
</dbReference>
<dbReference type="EMBL" id="CP002685">
    <property type="protein sequence ID" value="AEC10301.1"/>
    <property type="molecule type" value="Genomic_DNA"/>
</dbReference>
<dbReference type="EMBL" id="AY099689">
    <property type="protein sequence ID" value="AAM20540.1"/>
    <property type="molecule type" value="mRNA"/>
</dbReference>
<dbReference type="EMBL" id="AY128870">
    <property type="protein sequence ID" value="AAM91270.1"/>
    <property type="molecule type" value="mRNA"/>
</dbReference>
<dbReference type="EMBL" id="AK226692">
    <property type="protein sequence ID" value="BAE98799.1"/>
    <property type="molecule type" value="mRNA"/>
</dbReference>
<dbReference type="PIR" id="G84868">
    <property type="entry name" value="G84868"/>
</dbReference>
<dbReference type="RefSeq" id="NP_850397.1">
    <property type="nucleotide sequence ID" value="NM_180066.3"/>
</dbReference>
<dbReference type="SMR" id="Q8L3P4"/>
<dbReference type="FunCoup" id="Q8L3P4">
    <property type="interactions" value="3057"/>
</dbReference>
<dbReference type="IntAct" id="Q8L3P4">
    <property type="interactions" value="2"/>
</dbReference>
<dbReference type="STRING" id="3702.Q8L3P4"/>
<dbReference type="iPTMnet" id="Q8L3P4"/>
<dbReference type="PaxDb" id="3702-AT2G43650.1"/>
<dbReference type="ProteomicsDB" id="251949"/>
<dbReference type="EnsemblPlants" id="AT2G43650.1">
    <property type="protein sequence ID" value="AT2G43650.1"/>
    <property type="gene ID" value="AT2G43650"/>
</dbReference>
<dbReference type="GeneID" id="818967"/>
<dbReference type="Gramene" id="AT2G43650.1">
    <property type="protein sequence ID" value="AT2G43650.1"/>
    <property type="gene ID" value="AT2G43650"/>
</dbReference>
<dbReference type="KEGG" id="ath:AT2G43650"/>
<dbReference type="Araport" id="AT2G43650"/>
<dbReference type="TAIR" id="AT2G43650">
    <property type="gene designation" value="EMB2777"/>
</dbReference>
<dbReference type="eggNOG" id="KOG3118">
    <property type="taxonomic scope" value="Eukaryota"/>
</dbReference>
<dbReference type="HOGENOM" id="CLU_029301_0_0_1"/>
<dbReference type="InParanoid" id="Q8L3P4"/>
<dbReference type="OMA" id="EEYIRPQ"/>
<dbReference type="PhylomeDB" id="Q8L3P4"/>
<dbReference type="CD-CODE" id="4299E36E">
    <property type="entry name" value="Nucleolus"/>
</dbReference>
<dbReference type="PRO" id="PR:Q8L3P4"/>
<dbReference type="Proteomes" id="UP000006548">
    <property type="component" value="Chromosome 2"/>
</dbReference>
<dbReference type="ExpressionAtlas" id="Q8L3P4">
    <property type="expression patterns" value="baseline and differential"/>
</dbReference>
<dbReference type="GO" id="GO:0005730">
    <property type="term" value="C:nucleolus"/>
    <property type="evidence" value="ECO:0000314"/>
    <property type="project" value="TAIR"/>
</dbReference>
<dbReference type="GO" id="GO:1990904">
    <property type="term" value="C:ribonucleoprotein complex"/>
    <property type="evidence" value="ECO:0007669"/>
    <property type="project" value="UniProtKB-KW"/>
</dbReference>
<dbReference type="GO" id="GO:0003723">
    <property type="term" value="F:RNA binding"/>
    <property type="evidence" value="ECO:0007669"/>
    <property type="project" value="UniProtKB-KW"/>
</dbReference>
<dbReference type="GO" id="GO:0006325">
    <property type="term" value="P:chromatin organization"/>
    <property type="evidence" value="ECO:0007669"/>
    <property type="project" value="UniProtKB-KW"/>
</dbReference>
<dbReference type="GO" id="GO:0006364">
    <property type="term" value="P:rRNA processing"/>
    <property type="evidence" value="ECO:0000315"/>
    <property type="project" value="TAIR"/>
</dbReference>
<dbReference type="InterPro" id="IPR007146">
    <property type="entry name" value="Sas10/Utp3/C1D"/>
</dbReference>
<dbReference type="InterPro" id="IPR018972">
    <property type="entry name" value="Sas10_C_dom"/>
</dbReference>
<dbReference type="PANTHER" id="PTHR13237:SF8">
    <property type="entry name" value="SOMETHING ABOUT SILENCING PROTEIN 10"/>
    <property type="match status" value="1"/>
</dbReference>
<dbReference type="PANTHER" id="PTHR13237">
    <property type="entry name" value="SOMETHING ABOUT SILENCING PROTEIN 10-RELATED"/>
    <property type="match status" value="1"/>
</dbReference>
<dbReference type="Pfam" id="PF09368">
    <property type="entry name" value="Sas10"/>
    <property type="match status" value="1"/>
</dbReference>
<dbReference type="Pfam" id="PF04000">
    <property type="entry name" value="Sas10_Utp3"/>
    <property type="match status" value="1"/>
</dbReference>
<gene>
    <name evidence="8" type="primary">THAL</name>
    <name evidence="7" type="synonym">EMB2777</name>
    <name evidence="11" type="ordered locus">At2g43650</name>
    <name evidence="12" type="ORF">F18O19.24</name>
</gene>
<protein>
    <recommendedName>
        <fullName evidence="8">Protein THALLO</fullName>
    </recommendedName>
    <alternativeName>
        <fullName evidence="7">Protein EMBRYO DEFECTIVE 2777</fullName>
    </alternativeName>
</protein>
<feature type="chain" id="PRO_0000454729" description="Protein THALLO">
    <location>
        <begin position="1"/>
        <end position="654"/>
    </location>
</feature>
<feature type="region of interest" description="Disordered" evidence="4">
    <location>
        <begin position="1"/>
        <end position="23"/>
    </location>
</feature>
<feature type="region of interest" description="Disordered" evidence="4">
    <location>
        <begin position="35"/>
        <end position="145"/>
    </location>
</feature>
<feature type="region of interest" description="Disordered" evidence="4">
    <location>
        <begin position="164"/>
        <end position="212"/>
    </location>
</feature>
<feature type="region of interest" description="Disordered" evidence="4">
    <location>
        <begin position="362"/>
        <end position="397"/>
    </location>
</feature>
<feature type="region of interest" description="Disordered" evidence="4">
    <location>
        <begin position="470"/>
        <end position="492"/>
    </location>
</feature>
<feature type="region of interest" description="Disordered" evidence="4">
    <location>
        <begin position="509"/>
        <end position="654"/>
    </location>
</feature>
<feature type="coiled-coil region" evidence="2">
    <location>
        <begin position="140"/>
        <end position="160"/>
    </location>
</feature>
<feature type="coiled-coil region" evidence="2">
    <location>
        <begin position="243"/>
        <end position="263"/>
    </location>
</feature>
<feature type="short sequence motif" description="Nuclear localization signal 1" evidence="3">
    <location>
        <begin position="2"/>
        <end position="9"/>
    </location>
</feature>
<feature type="short sequence motif" description="Nuclear localization signal 2" evidence="3">
    <location>
        <begin position="608"/>
        <end position="615"/>
    </location>
</feature>
<feature type="compositionally biased region" description="Basic residues" evidence="4">
    <location>
        <begin position="1"/>
        <end position="16"/>
    </location>
</feature>
<feature type="compositionally biased region" description="Acidic residues" evidence="4">
    <location>
        <begin position="44"/>
        <end position="56"/>
    </location>
</feature>
<feature type="compositionally biased region" description="Acidic residues" evidence="4">
    <location>
        <begin position="64"/>
        <end position="82"/>
    </location>
</feature>
<feature type="compositionally biased region" description="Acidic residues" evidence="4">
    <location>
        <begin position="103"/>
        <end position="114"/>
    </location>
</feature>
<feature type="compositionally biased region" description="Acidic residues" evidence="4">
    <location>
        <begin position="171"/>
        <end position="181"/>
    </location>
</feature>
<feature type="compositionally biased region" description="Basic and acidic residues" evidence="4">
    <location>
        <begin position="182"/>
        <end position="212"/>
    </location>
</feature>
<feature type="compositionally biased region" description="Basic and acidic residues" evidence="4">
    <location>
        <begin position="364"/>
        <end position="387"/>
    </location>
</feature>
<feature type="compositionally biased region" description="Acidic residues" evidence="4">
    <location>
        <begin position="524"/>
        <end position="546"/>
    </location>
</feature>
<feature type="compositionally biased region" description="Basic residues" evidence="4">
    <location>
        <begin position="552"/>
        <end position="561"/>
    </location>
</feature>
<feature type="compositionally biased region" description="Polar residues" evidence="4">
    <location>
        <begin position="588"/>
        <end position="599"/>
    </location>
</feature>
<feature type="compositionally biased region" description="Polar residues" evidence="4">
    <location>
        <begin position="645"/>
        <end position="654"/>
    </location>
</feature>
<reference key="1">
    <citation type="journal article" date="1999" name="Nature">
        <title>Sequence and analysis of chromosome 2 of the plant Arabidopsis thaliana.</title>
        <authorList>
            <person name="Lin X."/>
            <person name="Kaul S."/>
            <person name="Rounsley S.D."/>
            <person name="Shea T.P."/>
            <person name="Benito M.-I."/>
            <person name="Town C.D."/>
            <person name="Fujii C.Y."/>
            <person name="Mason T.M."/>
            <person name="Bowman C.L."/>
            <person name="Barnstead M.E."/>
            <person name="Feldblyum T.V."/>
            <person name="Buell C.R."/>
            <person name="Ketchum K.A."/>
            <person name="Lee J.J."/>
            <person name="Ronning C.M."/>
            <person name="Koo H.L."/>
            <person name="Moffat K.S."/>
            <person name="Cronin L.A."/>
            <person name="Shen M."/>
            <person name="Pai G."/>
            <person name="Van Aken S."/>
            <person name="Umayam L."/>
            <person name="Tallon L.J."/>
            <person name="Gill J.E."/>
            <person name="Adams M.D."/>
            <person name="Carrera A.J."/>
            <person name="Creasy T.H."/>
            <person name="Goodman H.M."/>
            <person name="Somerville C.R."/>
            <person name="Copenhaver G.P."/>
            <person name="Preuss D."/>
            <person name="Nierman W.C."/>
            <person name="White O."/>
            <person name="Eisen J.A."/>
            <person name="Salzberg S.L."/>
            <person name="Fraser C.M."/>
            <person name="Venter J.C."/>
        </authorList>
    </citation>
    <scope>NUCLEOTIDE SEQUENCE [LARGE SCALE GENOMIC DNA]</scope>
    <source>
        <strain>cv. Columbia</strain>
    </source>
</reference>
<reference key="2">
    <citation type="journal article" date="2017" name="Plant J.">
        <title>Araport11: a complete reannotation of the Arabidopsis thaliana reference genome.</title>
        <authorList>
            <person name="Cheng C.Y."/>
            <person name="Krishnakumar V."/>
            <person name="Chan A.P."/>
            <person name="Thibaud-Nissen F."/>
            <person name="Schobel S."/>
            <person name="Town C.D."/>
        </authorList>
    </citation>
    <scope>GENOME REANNOTATION</scope>
    <source>
        <strain>cv. Columbia</strain>
    </source>
</reference>
<reference key="3">
    <citation type="journal article" date="2003" name="Science">
        <title>Empirical analysis of transcriptional activity in the Arabidopsis genome.</title>
        <authorList>
            <person name="Yamada K."/>
            <person name="Lim J."/>
            <person name="Dale J.M."/>
            <person name="Chen H."/>
            <person name="Shinn P."/>
            <person name="Palm C.J."/>
            <person name="Southwick A.M."/>
            <person name="Wu H.C."/>
            <person name="Kim C.J."/>
            <person name="Nguyen M."/>
            <person name="Pham P.K."/>
            <person name="Cheuk R.F."/>
            <person name="Karlin-Newmann G."/>
            <person name="Liu S.X."/>
            <person name="Lam B."/>
            <person name="Sakano H."/>
            <person name="Wu T."/>
            <person name="Yu G."/>
            <person name="Miranda M."/>
            <person name="Quach H.L."/>
            <person name="Tripp M."/>
            <person name="Chang C.H."/>
            <person name="Lee J.M."/>
            <person name="Toriumi M.J."/>
            <person name="Chan M.M."/>
            <person name="Tang C.C."/>
            <person name="Onodera C.S."/>
            <person name="Deng J.M."/>
            <person name="Akiyama K."/>
            <person name="Ansari Y."/>
            <person name="Arakawa T."/>
            <person name="Banh J."/>
            <person name="Banno F."/>
            <person name="Bowser L."/>
            <person name="Brooks S.Y."/>
            <person name="Carninci P."/>
            <person name="Chao Q."/>
            <person name="Choy N."/>
            <person name="Enju A."/>
            <person name="Goldsmith A.D."/>
            <person name="Gurjal M."/>
            <person name="Hansen N.F."/>
            <person name="Hayashizaki Y."/>
            <person name="Johnson-Hopson C."/>
            <person name="Hsuan V.W."/>
            <person name="Iida K."/>
            <person name="Karnes M."/>
            <person name="Khan S."/>
            <person name="Koesema E."/>
            <person name="Ishida J."/>
            <person name="Jiang P.X."/>
            <person name="Jones T."/>
            <person name="Kawai J."/>
            <person name="Kamiya A."/>
            <person name="Meyers C."/>
            <person name="Nakajima M."/>
            <person name="Narusaka M."/>
            <person name="Seki M."/>
            <person name="Sakurai T."/>
            <person name="Satou M."/>
            <person name="Tamse R."/>
            <person name="Vaysberg M."/>
            <person name="Wallender E.K."/>
            <person name="Wong C."/>
            <person name="Yamamura Y."/>
            <person name="Yuan S."/>
            <person name="Shinozaki K."/>
            <person name="Davis R.W."/>
            <person name="Theologis A."/>
            <person name="Ecker J.R."/>
        </authorList>
    </citation>
    <scope>NUCLEOTIDE SEQUENCE [LARGE SCALE MRNA]</scope>
    <source>
        <strain>cv. Columbia</strain>
    </source>
</reference>
<reference key="4">
    <citation type="submission" date="2006-07" db="EMBL/GenBank/DDBJ databases">
        <title>Large-scale analysis of RIKEN Arabidopsis full-length (RAFL) cDNAs.</title>
        <authorList>
            <person name="Totoki Y."/>
            <person name="Seki M."/>
            <person name="Ishida J."/>
            <person name="Nakajima M."/>
            <person name="Enju A."/>
            <person name="Kamiya A."/>
            <person name="Narusaka M."/>
            <person name="Shin-i T."/>
            <person name="Nakagawa M."/>
            <person name="Sakamoto N."/>
            <person name="Oishi K."/>
            <person name="Kohara Y."/>
            <person name="Kobayashi M."/>
            <person name="Toyoda A."/>
            <person name="Sakaki Y."/>
            <person name="Sakurai T."/>
            <person name="Iida K."/>
            <person name="Akiyama K."/>
            <person name="Satou M."/>
            <person name="Toyoda T."/>
            <person name="Konagaya A."/>
            <person name="Carninci P."/>
            <person name="Kawai J."/>
            <person name="Hayashizaki Y."/>
            <person name="Shinozaki K."/>
        </authorList>
    </citation>
    <scope>NUCLEOTIDE SEQUENCE [LARGE SCALE MRNA] OF 1-383</scope>
    <source>
        <strain>cv. Columbia</strain>
    </source>
</reference>
<reference key="5">
    <citation type="journal article" date="2004" name="Plant Physiol.">
        <title>Identification of genes required for embryo development in Arabidopsis.</title>
        <authorList>
            <person name="Tzafrir I."/>
            <person name="Pena-Muralla R."/>
            <person name="Dickerman A."/>
            <person name="Berg M."/>
            <person name="Rogers R."/>
            <person name="Hutchens S."/>
            <person name="Sweeney T.C."/>
            <person name="McElver J."/>
            <person name="Aux G."/>
            <person name="Patton D."/>
            <person name="Meinke D."/>
        </authorList>
    </citation>
    <scope>FUNCTION</scope>
    <scope>DISRUPTION PHENOTYPE</scope>
</reference>
<reference key="6">
    <citation type="journal article" date="2009" name="Plant Physiol.">
        <title>Large-scale Arabidopsis phosphoproteome profiling reveals novel chloroplast kinase substrates and phosphorylation networks.</title>
        <authorList>
            <person name="Reiland S."/>
            <person name="Messerli G."/>
            <person name="Baerenfaller K."/>
            <person name="Gerrits B."/>
            <person name="Endler A."/>
            <person name="Grossmann J."/>
            <person name="Gruissem W."/>
            <person name="Baginsky S."/>
        </authorList>
    </citation>
    <scope>IDENTIFICATION BY MASS SPECTROMETRY [LARGE SCALE ANALYSIS]</scope>
</reference>
<reference key="7">
    <citation type="journal article" date="2016" name="PLoS Genet.">
        <title>Dual role of a SAS10/C1D family protein in ribosomal RNA gene expression and processing is essential for reproduction in Arabidopsis thaliana.</title>
        <authorList>
            <person name="Chen Y.-J.C."/>
            <person name="Wang H.-J."/>
            <person name="Jauh G.-Y."/>
        </authorList>
    </citation>
    <scope>FUNCTION</scope>
    <scope>DISRUPTION PHENOTYPE</scope>
    <scope>SUBCELLULAR LOCATION</scope>
    <scope>TISSUE SPECIFICITY</scope>
    <scope>DEVELOPMENTAL STAGE</scope>
    <scope>INTERACTION WITH NUCL1; NUCL2; JMJ14; NOF1 AND MPP10</scope>
    <source>
        <strain>cv. Columbia</strain>
    </source>
</reference>
<sequence length="654" mass="73973">MGKKGGTLKRSSKSTKTRKDIVEDQYDDEIDAFHKQRDIVPLDVNDDTDESDEDDVQPVFDLQGVDDESEEDEDTEDEEEAENGLTAKMIRQKKYLRAKFGDGDDEMADDDKDKEEDKRSTWGGRSGLYHSGDNVDFDILSSDDEDIKAEEEEVIRLRAEQLGSITAADAGLDDDSEEDSDRELTMEEISDKGKQATKSITDKKEKGDKDTHVEEIKKDINSLSKEEQMDVVYSSAPEIVGLLSELNDAVEELESKINPVMNKLKEGEISLNGLARYLEVKQLLLLTYCQSITFYLLLKSEGQPIRDHPVLARLVEIKSLLDKIKELDEELPPGFEESLARSIANGAVQKVVKEDQLTSPVSDSVDRITQDTAKPMKIDNAREEKKKKGEKRKHQNDLVDVQSEEMLKLRAALEGKLRTNGVLGSTVSKSDKAQKRQKLANRKLETFDDYVDDADNSTHNVTADKLTKLVSTKRKPKTISGDDDLPQRDDIGERRRKFELRVLAGAGVKSSEGDGRNKNGAFASDDEDDNDGDNNDMVDNDGESEDEFYKQVKQKQQAKRAAKAEIYSRKPHLMPSSPEHVDGKRHISNQMVSNRGLTRQRNRDLKNPRKKYRKNYEKKVTRRKGQVRDIRKQTGPYAGEARGINPNTSRSIRM</sequence>